<reference key="1">
    <citation type="journal article" date="2005" name="J. Biol. Chem.">
        <title>Serinc, an activity-regulated protein family, incorporates serine into membrane lipid synthesis.</title>
        <authorList>
            <person name="Inuzuka M."/>
            <person name="Hayakawa M."/>
            <person name="Ingi T."/>
        </authorList>
    </citation>
    <scope>NUCLEOTIDE SEQUENCE [MRNA] (ISOFORM 2)</scope>
    <scope>FUNCTION</scope>
    <source>
        <tissue>Lung</tissue>
    </source>
</reference>
<reference key="2">
    <citation type="journal article" date="2006" name="Nature">
        <title>Analysis of the DNA sequence and duplication history of human chromosome 15.</title>
        <authorList>
            <person name="Zody M.C."/>
            <person name="Garber M."/>
            <person name="Sharpe T."/>
            <person name="Young S.K."/>
            <person name="Rowen L."/>
            <person name="O'Neill K."/>
            <person name="Whittaker C.A."/>
            <person name="Kamal M."/>
            <person name="Chang J.L."/>
            <person name="Cuomo C.A."/>
            <person name="Dewar K."/>
            <person name="FitzGerald M.G."/>
            <person name="Kodira C.D."/>
            <person name="Madan A."/>
            <person name="Qin S."/>
            <person name="Yang X."/>
            <person name="Abbasi N."/>
            <person name="Abouelleil A."/>
            <person name="Arachchi H.M."/>
            <person name="Baradarani L."/>
            <person name="Birditt B."/>
            <person name="Bloom S."/>
            <person name="Bloom T."/>
            <person name="Borowsky M.L."/>
            <person name="Burke J."/>
            <person name="Butler J."/>
            <person name="Cook A."/>
            <person name="DeArellano K."/>
            <person name="DeCaprio D."/>
            <person name="Dorris L. III"/>
            <person name="Dors M."/>
            <person name="Eichler E.E."/>
            <person name="Engels R."/>
            <person name="Fahey J."/>
            <person name="Fleetwood P."/>
            <person name="Friedman C."/>
            <person name="Gearin G."/>
            <person name="Hall J.L."/>
            <person name="Hensley G."/>
            <person name="Johnson E."/>
            <person name="Jones C."/>
            <person name="Kamat A."/>
            <person name="Kaur A."/>
            <person name="Locke D.P."/>
            <person name="Madan A."/>
            <person name="Munson G."/>
            <person name="Jaffe D.B."/>
            <person name="Lui A."/>
            <person name="Macdonald P."/>
            <person name="Mauceli E."/>
            <person name="Naylor J.W."/>
            <person name="Nesbitt R."/>
            <person name="Nicol R."/>
            <person name="O'Leary S.B."/>
            <person name="Ratcliffe A."/>
            <person name="Rounsley S."/>
            <person name="She X."/>
            <person name="Sneddon K.M.B."/>
            <person name="Stewart S."/>
            <person name="Sougnez C."/>
            <person name="Stone S.M."/>
            <person name="Topham K."/>
            <person name="Vincent D."/>
            <person name="Wang S."/>
            <person name="Zimmer A.R."/>
            <person name="Birren B.W."/>
            <person name="Hood L."/>
            <person name="Lander E.S."/>
            <person name="Nusbaum C."/>
        </authorList>
    </citation>
    <scope>NUCLEOTIDE SEQUENCE [LARGE SCALE GENOMIC DNA]</scope>
</reference>
<reference key="3">
    <citation type="submission" date="2005-07" db="EMBL/GenBank/DDBJ databases">
        <authorList>
            <person name="Mural R.J."/>
            <person name="Istrail S."/>
            <person name="Sutton G.G."/>
            <person name="Florea L."/>
            <person name="Halpern A.L."/>
            <person name="Mobarry C.M."/>
            <person name="Lippert R."/>
            <person name="Walenz B."/>
            <person name="Shatkay H."/>
            <person name="Dew I."/>
            <person name="Miller J.R."/>
            <person name="Flanigan M.J."/>
            <person name="Edwards N.J."/>
            <person name="Bolanos R."/>
            <person name="Fasulo D."/>
            <person name="Halldorsson B.V."/>
            <person name="Hannenhalli S."/>
            <person name="Turner R."/>
            <person name="Yooseph S."/>
            <person name="Lu F."/>
            <person name="Nusskern D.R."/>
            <person name="Shue B.C."/>
            <person name="Zheng X.H."/>
            <person name="Zhong F."/>
            <person name="Delcher A.L."/>
            <person name="Huson D.H."/>
            <person name="Kravitz S.A."/>
            <person name="Mouchard L."/>
            <person name="Reinert K."/>
            <person name="Remington K.A."/>
            <person name="Clark A.G."/>
            <person name="Waterman M.S."/>
            <person name="Eichler E.E."/>
            <person name="Adams M.D."/>
            <person name="Hunkapiller M.W."/>
            <person name="Myers E.W."/>
            <person name="Venter J.C."/>
        </authorList>
    </citation>
    <scope>NUCLEOTIDE SEQUENCE [LARGE SCALE GENOMIC DNA]</scope>
</reference>
<reference key="4">
    <citation type="journal article" date="2004" name="Genome Res.">
        <title>The status, quality, and expansion of the NIH full-length cDNA project: the Mammalian Gene Collection (MGC).</title>
        <authorList>
            <consortium name="The MGC Project Team"/>
        </authorList>
    </citation>
    <scope>NUCLEOTIDE SEQUENCE [LARGE SCALE MRNA] (ISOFORM 2)</scope>
    <source>
        <tissue>Brain</tissue>
    </source>
</reference>
<proteinExistence type="evidence at protein level"/>
<keyword id="KW-0025">Alternative splicing</keyword>
<keyword id="KW-0444">Lipid biosynthesis</keyword>
<keyword id="KW-0443">Lipid metabolism</keyword>
<keyword id="KW-0472">Membrane</keyword>
<keyword id="KW-0594">Phospholipid biosynthesis</keyword>
<keyword id="KW-1208">Phospholipid metabolism</keyword>
<keyword id="KW-1267">Proteomics identification</keyword>
<keyword id="KW-1185">Reference proteome</keyword>
<keyword id="KW-0812">Transmembrane</keyword>
<keyword id="KW-1133">Transmembrane helix</keyword>
<dbReference type="EMBL" id="DQ103711">
    <property type="protein sequence ID" value="AAZ80298.1"/>
    <property type="molecule type" value="mRNA"/>
</dbReference>
<dbReference type="EMBL" id="AC018512">
    <property type="status" value="NOT_ANNOTATED_CDS"/>
    <property type="molecule type" value="Genomic_DNA"/>
</dbReference>
<dbReference type="EMBL" id="CH471082">
    <property type="protein sequence ID" value="EAW77244.1"/>
    <property type="molecule type" value="Genomic_DNA"/>
</dbReference>
<dbReference type="EMBL" id="CH471082">
    <property type="protein sequence ID" value="EAW77245.1"/>
    <property type="molecule type" value="Genomic_DNA"/>
</dbReference>
<dbReference type="EMBL" id="BC136669">
    <property type="protein sequence ID" value="AAI36670.1"/>
    <property type="molecule type" value="mRNA"/>
</dbReference>
<dbReference type="CCDS" id="CCDS58360.1">
    <molecule id="A6NH21-1"/>
</dbReference>
<dbReference type="RefSeq" id="NP_001244960.1">
    <molecule id="A6NH21-1"/>
    <property type="nucleotide sequence ID" value="NM_001258031.2"/>
</dbReference>
<dbReference type="RefSeq" id="NP_001244961.1">
    <molecule id="A6NH21-2"/>
    <property type="nucleotide sequence ID" value="NM_001258032.2"/>
</dbReference>
<dbReference type="EMDB" id="EMD-10277"/>
<dbReference type="SMR" id="A6NH21"/>
<dbReference type="FunCoup" id="A6NH21">
    <property type="interactions" value="58"/>
</dbReference>
<dbReference type="STRING" id="9606.ENSP00000319796"/>
<dbReference type="iPTMnet" id="A6NH21"/>
<dbReference type="PhosphoSitePlus" id="A6NH21"/>
<dbReference type="BioMuta" id="SERINC4"/>
<dbReference type="MassIVE" id="A6NH21"/>
<dbReference type="PaxDb" id="9606-ENSP00000319796"/>
<dbReference type="PeptideAtlas" id="A6NH21"/>
<dbReference type="Antibodypedia" id="11477">
    <property type="antibodies" value="55 antibodies from 17 providers"/>
</dbReference>
<dbReference type="DNASU" id="619189"/>
<dbReference type="Ensembl" id="ENST00000319327.7">
    <molecule id="A6NH21-1"/>
    <property type="protein sequence ID" value="ENSP00000319796.6"/>
    <property type="gene ID" value="ENSG00000184716.14"/>
</dbReference>
<dbReference type="GeneID" id="619189"/>
<dbReference type="KEGG" id="hsa:619189"/>
<dbReference type="MANE-Select" id="ENST00000319327.7">
    <property type="protein sequence ID" value="ENSP00000319796.6"/>
    <property type="RefSeq nucleotide sequence ID" value="NM_001258031.2"/>
    <property type="RefSeq protein sequence ID" value="NP_001244960.1"/>
</dbReference>
<dbReference type="UCSC" id="uc031qrp.2">
    <molecule id="A6NH21-1"/>
    <property type="organism name" value="human"/>
</dbReference>
<dbReference type="AGR" id="HGNC:32237"/>
<dbReference type="CTD" id="619189"/>
<dbReference type="GeneCards" id="SERINC4"/>
<dbReference type="HGNC" id="HGNC:32237">
    <property type="gene designation" value="SERINC4"/>
</dbReference>
<dbReference type="HPA" id="ENSG00000184716">
    <property type="expression patterns" value="Tissue enriched (retina)"/>
</dbReference>
<dbReference type="MIM" id="614550">
    <property type="type" value="gene"/>
</dbReference>
<dbReference type="neXtProt" id="NX_A6NH21"/>
<dbReference type="PharmGKB" id="PA142670936"/>
<dbReference type="VEuPathDB" id="HostDB:ENSG00000184716"/>
<dbReference type="eggNOG" id="KOG2592">
    <property type="taxonomic scope" value="Eukaryota"/>
</dbReference>
<dbReference type="GeneTree" id="ENSGT01030000234623"/>
<dbReference type="HOGENOM" id="CLU_029574_5_2_1"/>
<dbReference type="InParanoid" id="A6NH21"/>
<dbReference type="OMA" id="IHNFWFL"/>
<dbReference type="OrthoDB" id="5963193at2759"/>
<dbReference type="PAN-GO" id="A6NH21">
    <property type="GO annotations" value="1 GO annotation based on evolutionary models"/>
</dbReference>
<dbReference type="PhylomeDB" id="A6NH21"/>
<dbReference type="TreeFam" id="TF312881"/>
<dbReference type="PathwayCommons" id="A6NH21"/>
<dbReference type="Reactome" id="R-HSA-977347">
    <property type="pathway name" value="Serine biosynthesis"/>
</dbReference>
<dbReference type="BioGRID-ORCS" id="619189">
    <property type="hits" value="43 hits in 1138 CRISPR screens"/>
</dbReference>
<dbReference type="ChiTaRS" id="SERINC4">
    <property type="organism name" value="human"/>
</dbReference>
<dbReference type="GenomeRNAi" id="619189"/>
<dbReference type="Pharos" id="A6NH21">
    <property type="development level" value="Tdark"/>
</dbReference>
<dbReference type="PRO" id="PR:A6NH21"/>
<dbReference type="Proteomes" id="UP000005640">
    <property type="component" value="Chromosome 15"/>
</dbReference>
<dbReference type="RNAct" id="A6NH21">
    <property type="molecule type" value="protein"/>
</dbReference>
<dbReference type="Bgee" id="ENSG00000184716">
    <property type="expression patterns" value="Expressed in primordial germ cell in gonad and 58 other cell types or tissues"/>
</dbReference>
<dbReference type="ExpressionAtlas" id="A6NH21">
    <property type="expression patterns" value="baseline and differential"/>
</dbReference>
<dbReference type="GO" id="GO:0016020">
    <property type="term" value="C:membrane"/>
    <property type="evidence" value="ECO:0000318"/>
    <property type="project" value="GO_Central"/>
</dbReference>
<dbReference type="GO" id="GO:0008654">
    <property type="term" value="P:phospholipid biosynthetic process"/>
    <property type="evidence" value="ECO:0007669"/>
    <property type="project" value="UniProtKB-KW"/>
</dbReference>
<dbReference type="InterPro" id="IPR005016">
    <property type="entry name" value="TDE1/TMS"/>
</dbReference>
<dbReference type="PANTHER" id="PTHR10383">
    <property type="entry name" value="SERINE INCORPORATOR"/>
    <property type="match status" value="1"/>
</dbReference>
<dbReference type="PANTHER" id="PTHR10383:SF5">
    <property type="entry name" value="SERINE INCORPORATOR 4"/>
    <property type="match status" value="1"/>
</dbReference>
<dbReference type="Pfam" id="PF03348">
    <property type="entry name" value="Serinc"/>
    <property type="match status" value="1"/>
</dbReference>
<protein>
    <recommendedName>
        <fullName>Serine incorporator 4</fullName>
    </recommendedName>
</protein>
<organism>
    <name type="scientific">Homo sapiens</name>
    <name type="common">Human</name>
    <dbReference type="NCBI Taxonomy" id="9606"/>
    <lineage>
        <taxon>Eukaryota</taxon>
        <taxon>Metazoa</taxon>
        <taxon>Chordata</taxon>
        <taxon>Craniata</taxon>
        <taxon>Vertebrata</taxon>
        <taxon>Euteleostomi</taxon>
        <taxon>Mammalia</taxon>
        <taxon>Eutheria</taxon>
        <taxon>Euarchontoglires</taxon>
        <taxon>Primates</taxon>
        <taxon>Haplorrhini</taxon>
        <taxon>Catarrhini</taxon>
        <taxon>Hominidae</taxon>
        <taxon>Homo</taxon>
    </lineage>
</organism>
<comment type="function">
    <text evidence="2">Incorporates a polar amino acid serine into membranes and facilitates the synthesis of two serine-derived lipids, phosphatidylserine and sphingolipids.</text>
</comment>
<comment type="subcellular location">
    <subcellularLocation>
        <location evidence="5">Membrane</location>
        <topology evidence="5">Multi-pass membrane protein</topology>
    </subcellularLocation>
</comment>
<comment type="alternative products">
    <event type="alternative splicing"/>
    <isoform>
        <id>A6NH21-1</id>
        <name>1</name>
        <sequence type="displayed"/>
    </isoform>
    <isoform>
        <id>A6NH21-2</id>
        <name>2</name>
        <sequence type="described" ref="VSP_033584 VSP_033585"/>
    </isoform>
</comment>
<comment type="similarity">
    <text evidence="5">Belongs to the TDE1 family.</text>
</comment>
<sequence>MVGAKAGPSPGTSLGLAQQHSGGSSVLVKSPFCQVCCCGPAPCASCCHSRWPSLTASTCSRLFYILLHVGASAICCLLLSRTVVERVWGKTHRIQMPSGLCAHLFGLSDCPVLSGSGAVYRVCAGTATFHLLQAVLLVHLHSPTSPRAQLHNSFWLLKLLFLLGLCAIAFCIPDEHLFPAWHYIGICGGFAFILLQLVLITAFAHSWNKNWQTGAAQDCSWFLAVLLATLGFYSMAGVGAVLLFHYYTHPAGCLLNKMLLSLHLCFCGLISFLSIAPCIRLKQPRSGLLQASVISCYIMYLTFSALSSRPPERVILQGQNHTLCLPGLSKMEPQTPDISLAMLSASIMYACVLFACNEASYLAEVFGPLWIVKVYSYEFQKPSLCFCCPETVEADKGQRGGAARPADQETPPAPPVQVQHLSYNYSAFHFVFFLASLYVMVTLTNWFSYEGAELEKTFIKGSWATFWVKVASCWACVLLYLGLLLAPLCWPPTQKPQPLILRRRRHRIISPDNKYPPV</sequence>
<accession>A6NH21</accession>
<accession>B2RN41</accession>
<accession>Q3YL75</accession>
<feature type="chain" id="PRO_0000333871" description="Serine incorporator 4">
    <location>
        <begin position="1"/>
        <end position="518"/>
    </location>
</feature>
<feature type="transmembrane region" description="Helical" evidence="1">
    <location>
        <begin position="59"/>
        <end position="79"/>
    </location>
</feature>
<feature type="transmembrane region" description="Helical" evidence="1">
    <location>
        <begin position="122"/>
        <end position="142"/>
    </location>
</feature>
<feature type="transmembrane region" description="Helical" evidence="1">
    <location>
        <begin position="153"/>
        <end position="173"/>
    </location>
</feature>
<feature type="transmembrane region" description="Helical" evidence="1">
    <location>
        <begin position="184"/>
        <end position="204"/>
    </location>
</feature>
<feature type="transmembrane region" description="Helical" evidence="1">
    <location>
        <begin position="222"/>
        <end position="242"/>
    </location>
</feature>
<feature type="transmembrane region" description="Helical" evidence="1">
    <location>
        <begin position="259"/>
        <end position="279"/>
    </location>
</feature>
<feature type="transmembrane region" description="Helical" evidence="1">
    <location>
        <begin position="286"/>
        <end position="306"/>
    </location>
</feature>
<feature type="transmembrane region" description="Helical" evidence="1">
    <location>
        <begin position="338"/>
        <end position="357"/>
    </location>
</feature>
<feature type="transmembrane region" description="Helical" evidence="1">
    <location>
        <begin position="427"/>
        <end position="447"/>
    </location>
</feature>
<feature type="transmembrane region" description="Helical" evidence="1">
    <location>
        <begin position="470"/>
        <end position="490"/>
    </location>
</feature>
<feature type="splice variant" id="VSP_033584" description="In isoform 2." evidence="3 4">
    <location>
        <begin position="1"/>
        <end position="244"/>
    </location>
</feature>
<feature type="splice variant" id="VSP_033585" description="In isoform 2." evidence="3 4">
    <original>HYYTHPAGCLLNKMLLSLHLCFCGLISFLSIAPCIRLK</original>
    <variation>MSISSQHGITLASVEALHSSYCSWCLLQLLPIPGTRTE</variation>
    <location>
        <begin position="245"/>
        <end position="282"/>
    </location>
</feature>
<gene>
    <name type="primary">SERINC4</name>
</gene>
<evidence type="ECO:0000255" key="1"/>
<evidence type="ECO:0000269" key="2">
    <source>
    </source>
</evidence>
<evidence type="ECO:0000303" key="3">
    <source>
    </source>
</evidence>
<evidence type="ECO:0000303" key="4">
    <source>
    </source>
</evidence>
<evidence type="ECO:0000305" key="5"/>
<name>SERC4_HUMAN</name>